<proteinExistence type="evidence at transcript level"/>
<reference key="1">
    <citation type="submission" date="2004-06" db="EMBL/GenBank/DDBJ databases">
        <authorList>
            <consortium name="NIH - Xenopus Gene Collection (XGC) project"/>
        </authorList>
    </citation>
    <scope>NUCLEOTIDE SEQUENCE [LARGE SCALE MRNA]</scope>
    <source>
        <tissue>Embryo</tissue>
    </source>
</reference>
<sequence>MKLEIKCFIICKVLPLVWLNMAQIQQVGAPEEKEKTTALKDLLSRIDLDELMKKDEPPLEFPDTLEGFNYAFNELGQLRHIQTGDPFVFNYREDLHRWNQKRYEALGEIITKHVYELLEKDCELEKVYLPVDATDSEPRSFIFMSKDAMTNPDKMLVLIHGSGVVRAGQWARRLIINEDLNSGSQIPYIKRAMKEGYAVIVLNPNENYIEVEKSKVPADQPSPDSSDEPAEKRERRERNPKETKKRRDFYEKYRNPQKEKETLQVYIRDNGSPEEHALYVWDNFISKAAAENILFVAHSYGGLTFVELMIQREADVKNKVAAVALTDSVHNVWHQDASKTLREWMRENCCNWVSSSEPLDTSVESTLPDCPRVSAGTERHELTSWKSFHSIFKFFDDALQAKNTKTKPTPTRRSNRIKHEDL</sequence>
<dbReference type="EMBL" id="BC075487">
    <property type="protein sequence ID" value="AAH75487.1"/>
    <property type="status" value="ALT_INIT"/>
    <property type="molecule type" value="mRNA"/>
</dbReference>
<dbReference type="RefSeq" id="NP_001004971.1">
    <property type="nucleotide sequence ID" value="NM_001004971.1"/>
</dbReference>
<dbReference type="RefSeq" id="XP_012815235.1">
    <property type="nucleotide sequence ID" value="XM_012959781.2"/>
</dbReference>
<dbReference type="RefSeq" id="XP_012815238.1">
    <property type="nucleotide sequence ID" value="XM_012959784.2"/>
</dbReference>
<dbReference type="RefSeq" id="XP_017947671.1">
    <property type="nucleotide sequence ID" value="XM_018092182.1"/>
</dbReference>
<dbReference type="SMR" id="Q6DIP8"/>
<dbReference type="FunCoup" id="Q6DIP8">
    <property type="interactions" value="4115"/>
</dbReference>
<dbReference type="STRING" id="8364.ENSXETP00000027550"/>
<dbReference type="ESTHER" id="xentr-f172a">
    <property type="family name" value="Arb2_FAM172A"/>
</dbReference>
<dbReference type="PaxDb" id="8364-ENSXETP00000025347"/>
<dbReference type="DNASU" id="448398"/>
<dbReference type="GeneID" id="448398"/>
<dbReference type="KEGG" id="xtr:448398"/>
<dbReference type="AGR" id="Xenbase:XB-GENE-942392"/>
<dbReference type="CTD" id="83989"/>
<dbReference type="Xenbase" id="XB-GENE-942392">
    <property type="gene designation" value="arb2a"/>
</dbReference>
<dbReference type="eggNOG" id="KOG3967">
    <property type="taxonomic scope" value="Eukaryota"/>
</dbReference>
<dbReference type="InParanoid" id="Q6DIP8"/>
<dbReference type="OMA" id="LAFVELX"/>
<dbReference type="OrthoDB" id="421951at2759"/>
<dbReference type="PhylomeDB" id="Q6DIP8"/>
<dbReference type="TreeFam" id="TF315960"/>
<dbReference type="Proteomes" id="UP000008143">
    <property type="component" value="Chromosome 1"/>
</dbReference>
<dbReference type="Bgee" id="ENSXETG00000011592">
    <property type="expression patterns" value="Expressed in liver and 12 other cell types or tissues"/>
</dbReference>
<dbReference type="ExpressionAtlas" id="Q6DIP8">
    <property type="expression patterns" value="differential"/>
</dbReference>
<dbReference type="GO" id="GO:0005737">
    <property type="term" value="C:cytoplasm"/>
    <property type="evidence" value="ECO:0000250"/>
    <property type="project" value="UniProtKB"/>
</dbReference>
<dbReference type="GO" id="GO:0005634">
    <property type="term" value="C:nucleus"/>
    <property type="evidence" value="ECO:0000250"/>
    <property type="project" value="UniProtKB"/>
</dbReference>
<dbReference type="GO" id="GO:0006397">
    <property type="term" value="P:mRNA processing"/>
    <property type="evidence" value="ECO:0007669"/>
    <property type="project" value="UniProtKB-KW"/>
</dbReference>
<dbReference type="GO" id="GO:0008380">
    <property type="term" value="P:RNA splicing"/>
    <property type="evidence" value="ECO:0007669"/>
    <property type="project" value="UniProtKB-KW"/>
</dbReference>
<dbReference type="Gene3D" id="3.40.50.1820">
    <property type="entry name" value="alpha/beta hydrolase"/>
    <property type="match status" value="1"/>
</dbReference>
<dbReference type="InterPro" id="IPR029058">
    <property type="entry name" value="AB_hydrolase_fold"/>
</dbReference>
<dbReference type="InterPro" id="IPR048263">
    <property type="entry name" value="Arb2"/>
</dbReference>
<dbReference type="InterPro" id="IPR053858">
    <property type="entry name" value="Arb2_dom"/>
</dbReference>
<dbReference type="PANTHER" id="PTHR21357:SF3">
    <property type="entry name" value="COTRANSCRIPTIONAL REGULATOR FAM172A"/>
    <property type="match status" value="1"/>
</dbReference>
<dbReference type="PANTHER" id="PTHR21357">
    <property type="entry name" value="FAM172 FAMILY PROTEIN HOMOLOG CG10038"/>
    <property type="match status" value="1"/>
</dbReference>
<dbReference type="Pfam" id="PF22749">
    <property type="entry name" value="Arb2"/>
    <property type="match status" value="1"/>
</dbReference>
<dbReference type="SUPFAM" id="SSF53474">
    <property type="entry name" value="alpha/beta-Hydrolases"/>
    <property type="match status" value="1"/>
</dbReference>
<accession>Q6DIP8</accession>
<keyword id="KW-0963">Cytoplasm</keyword>
<keyword id="KW-0507">mRNA processing</keyword>
<keyword id="KW-0508">mRNA splicing</keyword>
<keyword id="KW-0539">Nucleus</keyword>
<keyword id="KW-1185">Reference proteome</keyword>
<keyword id="KW-0732">Signal</keyword>
<gene>
    <name type="primary">arb2a</name>
    <name type="synonym">fam172a</name>
</gene>
<comment type="function">
    <text evidence="1">May play role in the regulation of alternative splicing. May have hydrolase activity.</text>
</comment>
<comment type="subcellular location">
    <subcellularLocation>
        <location evidence="1">Nucleus</location>
    </subcellularLocation>
    <subcellularLocation>
        <location evidence="1">Cytoplasm</location>
    </subcellularLocation>
</comment>
<comment type="similarity">
    <text evidence="5">Belongs to the ARB2A family.</text>
</comment>
<comment type="sequence caution" evidence="5">
    <conflict type="erroneous initiation">
        <sequence resource="EMBL-CDS" id="AAH75487"/>
    </conflict>
</comment>
<feature type="signal peptide" evidence="3">
    <location>
        <begin position="1"/>
        <end position="19"/>
    </location>
</feature>
<feature type="chain" id="PRO_0000320935" description="Cotranscriptional regulator ARB2A homolog">
    <location>
        <begin position="20"/>
        <end position="422"/>
    </location>
</feature>
<feature type="region of interest" description="Disordered" evidence="4">
    <location>
        <begin position="213"/>
        <end position="253"/>
    </location>
</feature>
<feature type="region of interest" description="Disordered" evidence="4">
    <location>
        <begin position="403"/>
        <end position="422"/>
    </location>
</feature>
<feature type="compositionally biased region" description="Basic and acidic residues" evidence="4">
    <location>
        <begin position="229"/>
        <end position="242"/>
    </location>
</feature>
<feature type="active site" description="Nucleophile" evidence="1">
    <location>
        <position position="299"/>
    </location>
</feature>
<protein>
    <recommendedName>
        <fullName evidence="2">Cotranscriptional regulator ARB2A homolog</fullName>
    </recommendedName>
    <alternativeName>
        <fullName evidence="1">Cotranscriptional regulator FAM172A homolog</fullName>
    </alternativeName>
    <alternativeName>
        <fullName>Protein FAM172A</fullName>
    </alternativeName>
</protein>
<organism>
    <name type="scientific">Xenopus tropicalis</name>
    <name type="common">Western clawed frog</name>
    <name type="synonym">Silurana tropicalis</name>
    <dbReference type="NCBI Taxonomy" id="8364"/>
    <lineage>
        <taxon>Eukaryota</taxon>
        <taxon>Metazoa</taxon>
        <taxon>Chordata</taxon>
        <taxon>Craniata</taxon>
        <taxon>Vertebrata</taxon>
        <taxon>Euteleostomi</taxon>
        <taxon>Amphibia</taxon>
        <taxon>Batrachia</taxon>
        <taxon>Anura</taxon>
        <taxon>Pipoidea</taxon>
        <taxon>Pipidae</taxon>
        <taxon>Xenopodinae</taxon>
        <taxon>Xenopus</taxon>
        <taxon>Silurana</taxon>
    </lineage>
</organism>
<name>ARB2A_XENTR</name>
<evidence type="ECO:0000250" key="1">
    <source>
        <dbReference type="UniProtKB" id="Q3TNH5"/>
    </source>
</evidence>
<evidence type="ECO:0000250" key="2">
    <source>
        <dbReference type="UniProtKB" id="Q8WUF8"/>
    </source>
</evidence>
<evidence type="ECO:0000255" key="3"/>
<evidence type="ECO:0000256" key="4">
    <source>
        <dbReference type="SAM" id="MobiDB-lite"/>
    </source>
</evidence>
<evidence type="ECO:0000305" key="5"/>